<comment type="function">
    <text evidence="1">Catalytic subunit of the tRNA-splicing ligase complex that acts by directly joining spliced tRNA halves to mature-sized tRNAs by incorporating the precursor-derived splice junction phosphate into the mature tRNA as a canonical 3',5'-phosphodiester. May act as an RNA ligase with broad substrate specificity, and may function toward other RNAs.</text>
</comment>
<comment type="catalytic activity">
    <reaction evidence="1">
        <text>a 3'-end 3'-phospho-ribonucleotide-RNA + a 5'-end dephospho-ribonucleoside-RNA + GTP = a ribonucleotidyl-ribonucleotide-RNA + GMP + diphosphate</text>
        <dbReference type="Rhea" id="RHEA:68076"/>
        <dbReference type="Rhea" id="RHEA-COMP:10463"/>
        <dbReference type="Rhea" id="RHEA-COMP:13936"/>
        <dbReference type="Rhea" id="RHEA-COMP:17355"/>
        <dbReference type="ChEBI" id="CHEBI:33019"/>
        <dbReference type="ChEBI" id="CHEBI:37565"/>
        <dbReference type="ChEBI" id="CHEBI:58115"/>
        <dbReference type="ChEBI" id="CHEBI:83062"/>
        <dbReference type="ChEBI" id="CHEBI:138284"/>
        <dbReference type="ChEBI" id="CHEBI:173118"/>
        <dbReference type="EC" id="6.5.1.8"/>
    </reaction>
</comment>
<comment type="catalytic activity">
    <reaction evidence="1">
        <text>a 3'-end 2',3'-cyclophospho-ribonucleotide-RNA + a 5'-end dephospho-ribonucleoside-RNA + GTP + H2O = a ribonucleotidyl-ribonucleotide-RNA + GMP + diphosphate + H(+)</text>
        <dbReference type="Rhea" id="RHEA:68080"/>
        <dbReference type="Rhea" id="RHEA-COMP:10464"/>
        <dbReference type="Rhea" id="RHEA-COMP:13936"/>
        <dbReference type="Rhea" id="RHEA-COMP:17355"/>
        <dbReference type="ChEBI" id="CHEBI:15377"/>
        <dbReference type="ChEBI" id="CHEBI:15378"/>
        <dbReference type="ChEBI" id="CHEBI:33019"/>
        <dbReference type="ChEBI" id="CHEBI:37565"/>
        <dbReference type="ChEBI" id="CHEBI:58115"/>
        <dbReference type="ChEBI" id="CHEBI:83064"/>
        <dbReference type="ChEBI" id="CHEBI:138284"/>
        <dbReference type="ChEBI" id="CHEBI:173118"/>
        <dbReference type="EC" id="6.5.1.8"/>
    </reaction>
</comment>
<comment type="cofactor">
    <cofactor evidence="1">
        <name>Mn(2+)</name>
        <dbReference type="ChEBI" id="CHEBI:29035"/>
    </cofactor>
    <text evidence="1">Binds 2 manganese ions per subunit.</text>
</comment>
<comment type="subunit">
    <text evidence="1">Catalytic component of the tRNA-splicing ligase complex.</text>
</comment>
<comment type="miscellaneous">
    <text evidence="1">Ligation probably proceeds through 3 nucleotidyl transfer steps, with 2',3'-cyclic phosphate termini being hydrolyzed to 3'-P termini in a step that precedes 3'-P activation with GMP. In the first nucleotidyl transfer step, RTCB reacts with GTP to form a covalent RTCB-histidine-GMP intermediate with release of PPi; in the second step, the GMP moiety is transferred to the RNA 3'-P; in the third step, the 5'-OH from the opposite RNA strand attacks the activated 3'-P to form a 3',5'-phosphodiester bond and release GMP.</text>
</comment>
<comment type="similarity">
    <text evidence="1">Belongs to the RtcB family.</text>
</comment>
<gene>
    <name type="ORF">MICPUCDRAFT_24370</name>
</gene>
<proteinExistence type="inferred from homology"/>
<feature type="chain" id="PRO_0000407234" description="RNA-splicing ligase RtcB homolog">
    <location>
        <begin position="1"/>
        <end position="507"/>
    </location>
</feature>
<feature type="active site" description="GMP-histidine intermediate" evidence="1">
    <location>
        <position position="430"/>
    </location>
</feature>
<feature type="binding site" evidence="1">
    <location>
        <position position="121"/>
    </location>
    <ligand>
        <name>Mn(2+)</name>
        <dbReference type="ChEBI" id="CHEBI:29035"/>
        <label>1</label>
    </ligand>
</feature>
<feature type="binding site" evidence="1">
    <location>
        <position position="124"/>
    </location>
    <ligand>
        <name>Mn(2+)</name>
        <dbReference type="ChEBI" id="CHEBI:29035"/>
        <label>1</label>
    </ligand>
</feature>
<feature type="binding site" evidence="1">
    <location>
        <position position="124"/>
    </location>
    <ligand>
        <name>Mn(2+)</name>
        <dbReference type="ChEBI" id="CHEBI:29035"/>
        <label>2</label>
    </ligand>
</feature>
<feature type="binding site" evidence="1">
    <location>
        <begin position="228"/>
        <end position="232"/>
    </location>
    <ligand>
        <name>GMP</name>
        <dbReference type="ChEBI" id="CHEBI:58115"/>
    </ligand>
</feature>
<feature type="binding site" evidence="1">
    <location>
        <position position="229"/>
    </location>
    <ligand>
        <name>Mn(2+)</name>
        <dbReference type="ChEBI" id="CHEBI:29035"/>
        <label>1</label>
    </ligand>
</feature>
<feature type="binding site" evidence="1">
    <location>
        <position position="261"/>
    </location>
    <ligand>
        <name>Mn(2+)</name>
        <dbReference type="ChEBI" id="CHEBI:29035"/>
        <label>2</label>
    </ligand>
</feature>
<feature type="binding site" evidence="1">
    <location>
        <begin position="355"/>
        <end position="356"/>
    </location>
    <ligand>
        <name>GMP</name>
        <dbReference type="ChEBI" id="CHEBI:58115"/>
    </ligand>
</feature>
<feature type="binding site" evidence="1">
    <location>
        <position position="355"/>
    </location>
    <ligand>
        <name>Mn(2+)</name>
        <dbReference type="ChEBI" id="CHEBI:29035"/>
        <label>2</label>
    </ligand>
</feature>
<feature type="binding site" evidence="1">
    <location>
        <begin position="404"/>
        <end position="407"/>
    </location>
    <ligand>
        <name>GMP</name>
        <dbReference type="ChEBI" id="CHEBI:58115"/>
    </ligand>
</feature>
<feature type="binding site" evidence="1">
    <location>
        <position position="411"/>
    </location>
    <ligand>
        <name>GMP</name>
        <dbReference type="ChEBI" id="CHEBI:58115"/>
    </ligand>
</feature>
<feature type="binding site" evidence="1">
    <location>
        <begin position="430"/>
        <end position="433"/>
    </location>
    <ligand>
        <name>GMP</name>
        <dbReference type="ChEBI" id="CHEBI:58115"/>
    </ligand>
</feature>
<feature type="binding site" evidence="1">
    <location>
        <position position="506"/>
    </location>
    <ligand>
        <name>GMP</name>
        <dbReference type="ChEBI" id="CHEBI:58115"/>
    </ligand>
</feature>
<protein>
    <recommendedName>
        <fullName evidence="1">RNA-splicing ligase RtcB homolog</fullName>
        <ecNumber evidence="1">6.5.1.8</ecNumber>
    </recommendedName>
    <alternativeName>
        <fullName evidence="1">3'-phosphate/5'-hydroxy nucleic acid ligase</fullName>
    </alternativeName>
</protein>
<sequence length="507" mass="55115">MAPRRTYQQEMAFLSRVSANQWIVNEGFVPNMRVPGTFYVNKHLETLMFEELQQHVDSGGHGGFLPAVKQLANVACLPGIVGKSIAMPDVHSGYGFCIGNVAAFDMSDPAAVVSPGGVGFDINCGVRVVRTNLMESDVADVKEKLAQALFDHIPVGVGSQGIIPTSAAGLESALEMGMDWSLREGYAWAEDKEHCEEYGRMLTADPNKVSARAKKRGLPQMGTLGAGNHYAEIQVVDEIFDAHAAEKMGVDAVGQVMVMIHSGSRGLGHQVATDALTEMERAMARDGIETNDRQLACARINSTEGQNYLSAMSCAANYAWVNRSSMTFLCRQAFAKMFDSTPDDLDMHVVYDVSHNIAKIEEHMVDGKLKTLLVHRKGSTRAFPPHHPLIPVDYQYTGQPVMIGGTMGTCSYILTGTQKGMDETFGSTCHGAGRARSRNNSRNKLDYAEVLENLKTKGISIRVASPKLVMEEAPESYKDVTEVVNTCHDAGISKKAVKLRPIAVVKG</sequence>
<organism>
    <name type="scientific">Micromonas pusilla (strain CCMP1545)</name>
    <name type="common">Picoplanktonic green alga</name>
    <dbReference type="NCBI Taxonomy" id="564608"/>
    <lineage>
        <taxon>Eukaryota</taxon>
        <taxon>Viridiplantae</taxon>
        <taxon>Chlorophyta</taxon>
        <taxon>Mamiellophyceae</taxon>
        <taxon>Mamiellales</taxon>
        <taxon>Mamiellaceae</taxon>
        <taxon>Micromonas</taxon>
    </lineage>
</organism>
<reference key="1">
    <citation type="journal article" date="2009" name="Science">
        <title>Green evolution and dynamic adaptations revealed by genomes of the marine picoeukaryotes Micromonas.</title>
        <authorList>
            <person name="Worden A.Z."/>
            <person name="Lee J.H."/>
            <person name="Mock T."/>
            <person name="Rouze P."/>
            <person name="Simmons M.P."/>
            <person name="Aerts A.L."/>
            <person name="Allen A.E."/>
            <person name="Cuvelier M.L."/>
            <person name="Derelle E."/>
            <person name="Everett M.V."/>
            <person name="Foulon E."/>
            <person name="Grimwood J."/>
            <person name="Gundlach H."/>
            <person name="Henrissat B."/>
            <person name="Napoli C."/>
            <person name="McDonald S.M."/>
            <person name="Parker M.S."/>
            <person name="Rombauts S."/>
            <person name="Salamov A."/>
            <person name="Von Dassow P."/>
            <person name="Badger J.H."/>
            <person name="Coutinho P.M."/>
            <person name="Demir E."/>
            <person name="Dubchak I."/>
            <person name="Gentemann C."/>
            <person name="Eikrem W."/>
            <person name="Gready J.E."/>
            <person name="John U."/>
            <person name="Lanier W."/>
            <person name="Lindquist E.A."/>
            <person name="Lucas S."/>
            <person name="Mayer K.F."/>
            <person name="Moreau H."/>
            <person name="Not F."/>
            <person name="Otillar R."/>
            <person name="Panaud O."/>
            <person name="Pangilinan J."/>
            <person name="Paulsen I."/>
            <person name="Piegu B."/>
            <person name="Poliakov A."/>
            <person name="Robbens S."/>
            <person name="Schmutz J."/>
            <person name="Toulza E."/>
            <person name="Wyss T."/>
            <person name="Zelensky A."/>
            <person name="Zhou K."/>
            <person name="Armbrust E.V."/>
            <person name="Bhattacharya D."/>
            <person name="Goodenough U.W."/>
            <person name="Van de Peer Y."/>
            <person name="Grigoriev I.V."/>
        </authorList>
    </citation>
    <scope>NUCLEOTIDE SEQUENCE [LARGE SCALE GENOMIC DNA]</scope>
    <source>
        <strain>CCMP1545</strain>
    </source>
</reference>
<accession>C1MI97</accession>
<dbReference type="EC" id="6.5.1.8" evidence="1"/>
<dbReference type="EMBL" id="GG663735">
    <property type="protein sequence ID" value="EEH60882.1"/>
    <property type="molecule type" value="Genomic_DNA"/>
</dbReference>
<dbReference type="RefSeq" id="XP_003055630.1">
    <property type="nucleotide sequence ID" value="XM_003055584.1"/>
</dbReference>
<dbReference type="SMR" id="C1MI97"/>
<dbReference type="STRING" id="564608.C1MI97"/>
<dbReference type="GeneID" id="9681242"/>
<dbReference type="KEGG" id="mpp:MICPUCDRAFT_24370"/>
<dbReference type="eggNOG" id="KOG3833">
    <property type="taxonomic scope" value="Eukaryota"/>
</dbReference>
<dbReference type="OMA" id="QTRGVEC"/>
<dbReference type="OrthoDB" id="10249697at2759"/>
<dbReference type="Proteomes" id="UP000001876">
    <property type="component" value="Unassembled WGS sequence"/>
</dbReference>
<dbReference type="GO" id="GO:0005634">
    <property type="term" value="C:nucleus"/>
    <property type="evidence" value="ECO:0007669"/>
    <property type="project" value="TreeGrafter"/>
</dbReference>
<dbReference type="GO" id="GO:0072669">
    <property type="term" value="C:tRNA-splicing ligase complex"/>
    <property type="evidence" value="ECO:0007669"/>
    <property type="project" value="UniProtKB-UniRule"/>
</dbReference>
<dbReference type="GO" id="GO:0005525">
    <property type="term" value="F:GTP binding"/>
    <property type="evidence" value="ECO:0007669"/>
    <property type="project" value="UniProtKB-KW"/>
</dbReference>
<dbReference type="GO" id="GO:0046872">
    <property type="term" value="F:metal ion binding"/>
    <property type="evidence" value="ECO:0007669"/>
    <property type="project" value="UniProtKB-KW"/>
</dbReference>
<dbReference type="GO" id="GO:0003972">
    <property type="term" value="F:RNA ligase (ATP) activity"/>
    <property type="evidence" value="ECO:0007669"/>
    <property type="project" value="TreeGrafter"/>
</dbReference>
<dbReference type="GO" id="GO:0170057">
    <property type="term" value="F:RNA ligase (GTP) activity"/>
    <property type="evidence" value="ECO:0007669"/>
    <property type="project" value="UniProtKB-EC"/>
</dbReference>
<dbReference type="GO" id="GO:0006388">
    <property type="term" value="P:tRNA splicing, via endonucleolytic cleavage and ligation"/>
    <property type="evidence" value="ECO:0007669"/>
    <property type="project" value="UniProtKB-UniRule"/>
</dbReference>
<dbReference type="FunFam" id="3.90.1860.10:FF:000001">
    <property type="entry name" value="tRNA-splicing ligase RtcB homolog"/>
    <property type="match status" value="1"/>
</dbReference>
<dbReference type="Gene3D" id="3.90.1860.10">
    <property type="entry name" value="tRNA-splicing ligase RtcB"/>
    <property type="match status" value="1"/>
</dbReference>
<dbReference type="HAMAP" id="MF_03144">
    <property type="entry name" value="RtcB_euk"/>
    <property type="match status" value="1"/>
</dbReference>
<dbReference type="InterPro" id="IPR001233">
    <property type="entry name" value="RtcB"/>
</dbReference>
<dbReference type="InterPro" id="IPR036025">
    <property type="entry name" value="RtcB-like_sf"/>
</dbReference>
<dbReference type="InterPro" id="IPR027513">
    <property type="entry name" value="RtcB_euk"/>
</dbReference>
<dbReference type="PANTHER" id="PTHR11118">
    <property type="entry name" value="RNA-SPLICING LIGASE RTCB HOMOLOG"/>
    <property type="match status" value="1"/>
</dbReference>
<dbReference type="PANTHER" id="PTHR11118:SF1">
    <property type="entry name" value="RNA-SPLICING LIGASE RTCB HOMOLOG"/>
    <property type="match status" value="1"/>
</dbReference>
<dbReference type="Pfam" id="PF01139">
    <property type="entry name" value="RtcB"/>
    <property type="match status" value="1"/>
</dbReference>
<dbReference type="SUPFAM" id="SSF103365">
    <property type="entry name" value="Hypothetical protein PH1602"/>
    <property type="match status" value="1"/>
</dbReference>
<dbReference type="PROSITE" id="PS01288">
    <property type="entry name" value="UPF0027"/>
    <property type="match status" value="1"/>
</dbReference>
<keyword id="KW-0342">GTP-binding</keyword>
<keyword id="KW-0436">Ligase</keyword>
<keyword id="KW-0464">Manganese</keyword>
<keyword id="KW-0479">Metal-binding</keyword>
<keyword id="KW-0547">Nucleotide-binding</keyword>
<keyword id="KW-1185">Reference proteome</keyword>
<keyword id="KW-0819">tRNA processing</keyword>
<name>RTCB_MICPC</name>
<evidence type="ECO:0000255" key="1">
    <source>
        <dbReference type="HAMAP-Rule" id="MF_03144"/>
    </source>
</evidence>